<accession>Q9JVD3</accession>
<accession>A1IQT9</accession>
<comment type="function">
    <text evidence="1">Digests double-stranded RNA. Involved in the processing of primary rRNA transcript to yield the immediate precursors to the large and small rRNAs (23S and 16S). Also processes some mRNAs, and tRNAs when they are encoded in the rRNA operon (By similarity).</text>
</comment>
<comment type="function">
    <text evidence="3 4">CRISPR (clustered regularly interspaced short palindromic repeat) is an adaptive immune system that provides protection against mobile genetic elements (viruses, transposable elements and conjugative plasmids). CRISPR clusters contain spacers, sequences complementary to antecedent mobile elements, and target invading nucleic acids. CRISPR clusters are transcribed and processed into CRISPR RNA (crRNA). In this organism endogenous ribonuclease 3 and Cas9 are required for correct coprocessing of pre-crRNA and the trans-encoded small RNA (tracrRNA). Cas9, crRNA and tracrRNA are required for cleavage of invading DNA (Probable). Complements pre-crRNA and tracrRNA coprocessing defects in an rnc deletion in S.pyogenes strain 370 (PubMed:24270795).</text>
</comment>
<comment type="catalytic activity">
    <reaction evidence="2">
        <text>Endonucleolytic cleavage to 5'-phosphomonoester.</text>
        <dbReference type="EC" id="3.1.26.3"/>
    </reaction>
</comment>
<comment type="cofactor">
    <cofactor evidence="2">
        <name>Mg(2+)</name>
        <dbReference type="ChEBI" id="CHEBI:18420"/>
    </cofactor>
</comment>
<comment type="subunit">
    <text evidence="2">Homodimer.</text>
</comment>
<comment type="subcellular location">
    <subcellularLocation>
        <location evidence="2">Cytoplasm</location>
    </subcellularLocation>
</comment>
<comment type="similarity">
    <text evidence="2">Belongs to the ribonuclease III family.</text>
</comment>
<name>RNC_NEIMA</name>
<keyword id="KW-0963">Cytoplasm</keyword>
<keyword id="KW-0255">Endonuclease</keyword>
<keyword id="KW-0378">Hydrolase</keyword>
<keyword id="KW-0460">Magnesium</keyword>
<keyword id="KW-0479">Metal-binding</keyword>
<keyword id="KW-0507">mRNA processing</keyword>
<keyword id="KW-0540">Nuclease</keyword>
<keyword id="KW-0694">RNA-binding</keyword>
<keyword id="KW-0698">rRNA processing</keyword>
<keyword id="KW-0699">rRNA-binding</keyword>
<keyword id="KW-0819">tRNA processing</keyword>
<sequence length="239" mass="26841">MKDDVLKQQAHAAIQKKLGYAFRDISLLRQALTHRSHHAKHNERFEFVGDSILNYTVARMLFDAFPKLTEGELSRLRASLVNEGVLAEMAAEMNVGDGLYLGAGELKSGGFRRPSILADAMEAMFAAVSFDADFNTAEKVVRHLFAERVRRVDFQNQAKDGKTALQEALQARRFALPKYRIEEQIGHANDSMFVISCDLGELGFVCRAKGTSRKAAEQEAAKEALKWLEEKLPLKKKKK</sequence>
<evidence type="ECO:0000250" key="1"/>
<evidence type="ECO:0000255" key="2">
    <source>
        <dbReference type="HAMAP-Rule" id="MF_00104"/>
    </source>
</evidence>
<evidence type="ECO:0000269" key="3">
    <source>
    </source>
</evidence>
<evidence type="ECO:0000305" key="4"/>
<proteinExistence type="inferred from homology"/>
<reference key="1">
    <citation type="journal article" date="2000" name="Nature">
        <title>Complete DNA sequence of a serogroup A strain of Neisseria meningitidis Z2491.</title>
        <authorList>
            <person name="Parkhill J."/>
            <person name="Achtman M."/>
            <person name="James K.D."/>
            <person name="Bentley S.D."/>
            <person name="Churcher C.M."/>
            <person name="Klee S.R."/>
            <person name="Morelli G."/>
            <person name="Basham D."/>
            <person name="Brown D."/>
            <person name="Chillingworth T."/>
            <person name="Davies R.M."/>
            <person name="Davis P."/>
            <person name="Devlin K."/>
            <person name="Feltwell T."/>
            <person name="Hamlin N."/>
            <person name="Holroyd S."/>
            <person name="Jagels K."/>
            <person name="Leather S."/>
            <person name="Moule S."/>
            <person name="Mungall K.L."/>
            <person name="Quail M.A."/>
            <person name="Rajandream M.A."/>
            <person name="Rutherford K.M."/>
            <person name="Simmonds M."/>
            <person name="Skelton J."/>
            <person name="Whitehead S."/>
            <person name="Spratt B.G."/>
            <person name="Barrell B.G."/>
        </authorList>
    </citation>
    <scope>NUCLEOTIDE SEQUENCE [LARGE SCALE GENOMIC DNA]</scope>
    <source>
        <strain>DSM 15465 / Z2491</strain>
    </source>
</reference>
<reference key="2">
    <citation type="journal article" date="2014" name="Nucleic Acids Res.">
        <title>Phylogeny of Cas9 determines functional exchangeability of dual-RNA and Cas9 among orthologous type II CRISPR-Cas systems.</title>
        <authorList>
            <person name="Fonfara I."/>
            <person name="Le Rhun A."/>
            <person name="Chylinski K."/>
            <person name="Makarova K.S."/>
            <person name="Lecrivain A.L."/>
            <person name="Bzdrenga J."/>
            <person name="Koonin E.V."/>
            <person name="Charpentier E."/>
        </authorList>
    </citation>
    <scope>FUNCTION</scope>
</reference>
<feature type="chain" id="PRO_0000180415" description="Ribonuclease 3">
    <location>
        <begin position="1"/>
        <end position="239"/>
    </location>
</feature>
<feature type="domain" description="RNase III" evidence="2">
    <location>
        <begin position="11"/>
        <end position="133"/>
    </location>
</feature>
<feature type="domain" description="DRBM" evidence="2">
    <location>
        <begin position="160"/>
        <end position="230"/>
    </location>
</feature>
<feature type="active site" evidence="2">
    <location>
        <position position="50"/>
    </location>
</feature>
<feature type="active site" evidence="2">
    <location>
        <position position="122"/>
    </location>
</feature>
<feature type="binding site" evidence="2">
    <location>
        <position position="46"/>
    </location>
    <ligand>
        <name>Mg(2+)</name>
        <dbReference type="ChEBI" id="CHEBI:18420"/>
    </ligand>
</feature>
<feature type="binding site" evidence="2">
    <location>
        <position position="119"/>
    </location>
    <ligand>
        <name>Mg(2+)</name>
        <dbReference type="ChEBI" id="CHEBI:18420"/>
    </ligand>
</feature>
<feature type="binding site" evidence="2">
    <location>
        <position position="122"/>
    </location>
    <ligand>
        <name>Mg(2+)</name>
        <dbReference type="ChEBI" id="CHEBI:18420"/>
    </ligand>
</feature>
<organism>
    <name type="scientific">Neisseria meningitidis serogroup A / serotype 4A (strain DSM 15465 / Z2491)</name>
    <dbReference type="NCBI Taxonomy" id="122587"/>
    <lineage>
        <taxon>Bacteria</taxon>
        <taxon>Pseudomonadati</taxon>
        <taxon>Pseudomonadota</taxon>
        <taxon>Betaproteobacteria</taxon>
        <taxon>Neisseriales</taxon>
        <taxon>Neisseriaceae</taxon>
        <taxon>Neisseria</taxon>
    </lineage>
</organism>
<dbReference type="EC" id="3.1.26.3" evidence="2"/>
<dbReference type="EMBL" id="AL157959">
    <property type="protein sequence ID" value="CAM08123.1"/>
    <property type="molecule type" value="Genomic_DNA"/>
</dbReference>
<dbReference type="PIR" id="C81935">
    <property type="entry name" value="C81935"/>
</dbReference>
<dbReference type="RefSeq" id="WP_002236811.1">
    <property type="nucleotide sequence ID" value="NC_003116.1"/>
</dbReference>
<dbReference type="SMR" id="Q9JVD3"/>
<dbReference type="EnsemblBacteria" id="CAM08123">
    <property type="protein sequence ID" value="CAM08123"/>
    <property type="gene ID" value="NMA0888"/>
</dbReference>
<dbReference type="GeneID" id="93386488"/>
<dbReference type="KEGG" id="nma:NMA0888"/>
<dbReference type="HOGENOM" id="CLU_000907_1_1_4"/>
<dbReference type="Proteomes" id="UP000000626">
    <property type="component" value="Chromosome"/>
</dbReference>
<dbReference type="GO" id="GO:0005737">
    <property type="term" value="C:cytoplasm"/>
    <property type="evidence" value="ECO:0007669"/>
    <property type="project" value="UniProtKB-SubCell"/>
</dbReference>
<dbReference type="GO" id="GO:0003725">
    <property type="term" value="F:double-stranded RNA binding"/>
    <property type="evidence" value="ECO:0007669"/>
    <property type="project" value="TreeGrafter"/>
</dbReference>
<dbReference type="GO" id="GO:0046872">
    <property type="term" value="F:metal ion binding"/>
    <property type="evidence" value="ECO:0007669"/>
    <property type="project" value="UniProtKB-KW"/>
</dbReference>
<dbReference type="GO" id="GO:0004525">
    <property type="term" value="F:ribonuclease III activity"/>
    <property type="evidence" value="ECO:0007669"/>
    <property type="project" value="UniProtKB-UniRule"/>
</dbReference>
<dbReference type="GO" id="GO:0019843">
    <property type="term" value="F:rRNA binding"/>
    <property type="evidence" value="ECO:0007669"/>
    <property type="project" value="UniProtKB-KW"/>
</dbReference>
<dbReference type="GO" id="GO:0006397">
    <property type="term" value="P:mRNA processing"/>
    <property type="evidence" value="ECO:0007669"/>
    <property type="project" value="UniProtKB-UniRule"/>
</dbReference>
<dbReference type="GO" id="GO:0010468">
    <property type="term" value="P:regulation of gene expression"/>
    <property type="evidence" value="ECO:0007669"/>
    <property type="project" value="TreeGrafter"/>
</dbReference>
<dbReference type="GO" id="GO:0006364">
    <property type="term" value="P:rRNA processing"/>
    <property type="evidence" value="ECO:0007669"/>
    <property type="project" value="UniProtKB-UniRule"/>
</dbReference>
<dbReference type="GO" id="GO:0008033">
    <property type="term" value="P:tRNA processing"/>
    <property type="evidence" value="ECO:0007669"/>
    <property type="project" value="UniProtKB-KW"/>
</dbReference>
<dbReference type="CDD" id="cd10845">
    <property type="entry name" value="DSRM_RNAse_III_family"/>
    <property type="match status" value="1"/>
</dbReference>
<dbReference type="CDD" id="cd00593">
    <property type="entry name" value="RIBOc"/>
    <property type="match status" value="1"/>
</dbReference>
<dbReference type="FunFam" id="1.10.1520.10:FF:000001">
    <property type="entry name" value="Ribonuclease 3"/>
    <property type="match status" value="1"/>
</dbReference>
<dbReference type="Gene3D" id="3.30.160.20">
    <property type="match status" value="1"/>
</dbReference>
<dbReference type="Gene3D" id="1.10.1520.10">
    <property type="entry name" value="Ribonuclease III domain"/>
    <property type="match status" value="1"/>
</dbReference>
<dbReference type="HAMAP" id="MF_00104">
    <property type="entry name" value="RNase_III"/>
    <property type="match status" value="1"/>
</dbReference>
<dbReference type="InterPro" id="IPR014720">
    <property type="entry name" value="dsRBD_dom"/>
</dbReference>
<dbReference type="InterPro" id="IPR011907">
    <property type="entry name" value="RNase_III"/>
</dbReference>
<dbReference type="InterPro" id="IPR000999">
    <property type="entry name" value="RNase_III_dom"/>
</dbReference>
<dbReference type="InterPro" id="IPR036389">
    <property type="entry name" value="RNase_III_sf"/>
</dbReference>
<dbReference type="NCBIfam" id="TIGR02191">
    <property type="entry name" value="RNaseIII"/>
    <property type="match status" value="1"/>
</dbReference>
<dbReference type="PANTHER" id="PTHR11207:SF0">
    <property type="entry name" value="RIBONUCLEASE 3"/>
    <property type="match status" value="1"/>
</dbReference>
<dbReference type="PANTHER" id="PTHR11207">
    <property type="entry name" value="RIBONUCLEASE III"/>
    <property type="match status" value="1"/>
</dbReference>
<dbReference type="Pfam" id="PF00035">
    <property type="entry name" value="dsrm"/>
    <property type="match status" value="1"/>
</dbReference>
<dbReference type="Pfam" id="PF14622">
    <property type="entry name" value="Ribonucleas_3_3"/>
    <property type="match status" value="1"/>
</dbReference>
<dbReference type="SMART" id="SM00358">
    <property type="entry name" value="DSRM"/>
    <property type="match status" value="1"/>
</dbReference>
<dbReference type="SMART" id="SM00535">
    <property type="entry name" value="RIBOc"/>
    <property type="match status" value="1"/>
</dbReference>
<dbReference type="SUPFAM" id="SSF54768">
    <property type="entry name" value="dsRNA-binding domain-like"/>
    <property type="match status" value="1"/>
</dbReference>
<dbReference type="SUPFAM" id="SSF69065">
    <property type="entry name" value="RNase III domain-like"/>
    <property type="match status" value="1"/>
</dbReference>
<dbReference type="PROSITE" id="PS50137">
    <property type="entry name" value="DS_RBD"/>
    <property type="match status" value="1"/>
</dbReference>
<dbReference type="PROSITE" id="PS00517">
    <property type="entry name" value="RNASE_3_1"/>
    <property type="match status" value="1"/>
</dbReference>
<dbReference type="PROSITE" id="PS50142">
    <property type="entry name" value="RNASE_3_2"/>
    <property type="match status" value="1"/>
</dbReference>
<protein>
    <recommendedName>
        <fullName evidence="2">Ribonuclease 3</fullName>
        <ecNumber evidence="2">3.1.26.3</ecNumber>
    </recommendedName>
    <alternativeName>
        <fullName evidence="2">Ribonuclease III</fullName>
        <shortName evidence="2">RNase III</shortName>
    </alternativeName>
</protein>
<gene>
    <name evidence="2" type="primary">rnc</name>
    <name type="ordered locus">NMA0888</name>
</gene>